<dbReference type="EMBL" id="CP001158">
    <property type="protein sequence ID" value="ACL30350.1"/>
    <property type="molecule type" value="Genomic_DNA"/>
</dbReference>
<dbReference type="RefSeq" id="WP_009874512.1">
    <property type="nucleotide sequence ID" value="NC_011834.1"/>
</dbReference>
<dbReference type="SMR" id="B8D885"/>
<dbReference type="KEGG" id="bau:BUAPTUC7_558"/>
<dbReference type="HOGENOM" id="CLU_113441_6_1_6"/>
<dbReference type="GO" id="GO:0022627">
    <property type="term" value="C:cytosolic small ribosomal subunit"/>
    <property type="evidence" value="ECO:0007669"/>
    <property type="project" value="TreeGrafter"/>
</dbReference>
<dbReference type="GO" id="GO:0070181">
    <property type="term" value="F:small ribosomal subunit rRNA binding"/>
    <property type="evidence" value="ECO:0007669"/>
    <property type="project" value="TreeGrafter"/>
</dbReference>
<dbReference type="GO" id="GO:0003735">
    <property type="term" value="F:structural constituent of ribosome"/>
    <property type="evidence" value="ECO:0007669"/>
    <property type="project" value="InterPro"/>
</dbReference>
<dbReference type="GO" id="GO:0006412">
    <property type="term" value="P:translation"/>
    <property type="evidence" value="ECO:0007669"/>
    <property type="project" value="UniProtKB-UniRule"/>
</dbReference>
<dbReference type="CDD" id="cd00473">
    <property type="entry name" value="bS6"/>
    <property type="match status" value="1"/>
</dbReference>
<dbReference type="Gene3D" id="3.30.70.60">
    <property type="match status" value="1"/>
</dbReference>
<dbReference type="HAMAP" id="MF_00360">
    <property type="entry name" value="Ribosomal_bS6"/>
    <property type="match status" value="1"/>
</dbReference>
<dbReference type="InterPro" id="IPR000529">
    <property type="entry name" value="Ribosomal_bS6"/>
</dbReference>
<dbReference type="InterPro" id="IPR020815">
    <property type="entry name" value="Ribosomal_bS6_CS"/>
</dbReference>
<dbReference type="InterPro" id="IPR035980">
    <property type="entry name" value="Ribosomal_bS6_sf"/>
</dbReference>
<dbReference type="InterPro" id="IPR020814">
    <property type="entry name" value="Ribosomal_S6_plastid/chlpt"/>
</dbReference>
<dbReference type="InterPro" id="IPR014717">
    <property type="entry name" value="Transl_elong_EF1B/ribsomal_bS6"/>
</dbReference>
<dbReference type="NCBIfam" id="TIGR00166">
    <property type="entry name" value="S6"/>
    <property type="match status" value="1"/>
</dbReference>
<dbReference type="PANTHER" id="PTHR21011">
    <property type="entry name" value="MITOCHONDRIAL 28S RIBOSOMAL PROTEIN S6"/>
    <property type="match status" value="1"/>
</dbReference>
<dbReference type="PANTHER" id="PTHR21011:SF1">
    <property type="entry name" value="SMALL RIBOSOMAL SUBUNIT PROTEIN BS6M"/>
    <property type="match status" value="1"/>
</dbReference>
<dbReference type="Pfam" id="PF01250">
    <property type="entry name" value="Ribosomal_S6"/>
    <property type="match status" value="1"/>
</dbReference>
<dbReference type="SUPFAM" id="SSF54995">
    <property type="entry name" value="Ribosomal protein S6"/>
    <property type="match status" value="1"/>
</dbReference>
<dbReference type="PROSITE" id="PS01048">
    <property type="entry name" value="RIBOSOMAL_S6"/>
    <property type="match status" value="1"/>
</dbReference>
<protein>
    <recommendedName>
        <fullName evidence="1">Small ribosomal subunit protein bS6</fullName>
    </recommendedName>
    <alternativeName>
        <fullName evidence="2">30S ribosomal protein S6</fullName>
    </alternativeName>
</protein>
<organism>
    <name type="scientific">Buchnera aphidicola subsp. Acyrthosiphon pisum (strain Tuc7)</name>
    <dbReference type="NCBI Taxonomy" id="561501"/>
    <lineage>
        <taxon>Bacteria</taxon>
        <taxon>Pseudomonadati</taxon>
        <taxon>Pseudomonadota</taxon>
        <taxon>Gammaproteobacteria</taxon>
        <taxon>Enterobacterales</taxon>
        <taxon>Erwiniaceae</taxon>
        <taxon>Buchnera</taxon>
    </lineage>
</organism>
<sequence>MRHYEIIFMVHPDQSDKIPLLIEKYKKIINDNNGIIHRLEDWGRRQLSYSINKLQKAHYILMNIEVFPKTITLLETDFRFNNIILRNMIMSVKKAIVELSPILKLKDDKKEKK</sequence>
<evidence type="ECO:0000255" key="1">
    <source>
        <dbReference type="HAMAP-Rule" id="MF_00360"/>
    </source>
</evidence>
<evidence type="ECO:0000305" key="2"/>
<name>RS6_BUCAT</name>
<proteinExistence type="inferred from homology"/>
<accession>B8D885</accession>
<gene>
    <name evidence="1" type="primary">rpsF</name>
    <name type="ordered locus">BUAPTUC7_558</name>
</gene>
<feature type="chain" id="PRO_1000133515" description="Small ribosomal subunit protein bS6">
    <location>
        <begin position="1"/>
        <end position="113"/>
    </location>
</feature>
<keyword id="KW-0687">Ribonucleoprotein</keyword>
<keyword id="KW-0689">Ribosomal protein</keyword>
<keyword id="KW-0694">RNA-binding</keyword>
<keyword id="KW-0699">rRNA-binding</keyword>
<comment type="function">
    <text evidence="1">Binds together with bS18 to 16S ribosomal RNA.</text>
</comment>
<comment type="similarity">
    <text evidence="1">Belongs to the bacterial ribosomal protein bS6 family.</text>
</comment>
<reference key="1">
    <citation type="journal article" date="2009" name="Science">
        <title>The dynamics and time scale of ongoing genomic erosion in symbiotic bacteria.</title>
        <authorList>
            <person name="Moran N.A."/>
            <person name="McLaughlin H.J."/>
            <person name="Sorek R."/>
        </authorList>
    </citation>
    <scope>NUCLEOTIDE SEQUENCE [LARGE SCALE GENOMIC DNA]</scope>
    <source>
        <strain>Tuc7</strain>
    </source>
</reference>